<sequence>MRLQRNSIICALVFLVSFVLGDVNIVSPSSKATFSPSGGTVSVPVEWMDNGAYPSLSKISTFTFSLCTGPNNNIDCVAVLASKITPSELTQDDKVYSYTAEFASTLTGNGQYYIQVFAQVDGQGYTIHYTPRFQLTSMGGVTAYTYSATTEPTPQTSIQTTTTNNAQATTIDSRSFTVPYTKQTGTSRFAPMQMQPNTKVTATTWTRKFATSAVTYYSTFGSLPEQATTITPGWSYTISSGVNYATPASMPSDNGGWYKPSKRLSLSARKINMRKV</sequence>
<dbReference type="EMBL" id="L22517">
    <property type="protein sequence ID" value="AAC37363.1"/>
    <property type="molecule type" value="Genomic_DNA"/>
</dbReference>
<dbReference type="EMBL" id="X56792">
    <property type="protein sequence ID" value="CAA40111.1"/>
    <property type="molecule type" value="Genomic_DNA"/>
</dbReference>
<dbReference type="EMBL" id="Z49449">
    <property type="protein sequence ID" value="CAA89469.1"/>
    <property type="molecule type" value="Genomic_DNA"/>
</dbReference>
<dbReference type="EMBL" id="BK006943">
    <property type="protein sequence ID" value="DAA08630.1"/>
    <property type="molecule type" value="Genomic_DNA"/>
</dbReference>
<dbReference type="PIR" id="S23891">
    <property type="entry name" value="S23891"/>
</dbReference>
<dbReference type="RefSeq" id="NP_012361.1">
    <property type="nucleotide sequence ID" value="NM_001181607.1"/>
</dbReference>
<dbReference type="BioGRID" id="33586">
    <property type="interactions" value="316"/>
</dbReference>
<dbReference type="DIP" id="DIP-5609N"/>
<dbReference type="FunCoup" id="P39005">
    <property type="interactions" value="28"/>
</dbReference>
<dbReference type="IntAct" id="P39005">
    <property type="interactions" value="2"/>
</dbReference>
<dbReference type="MINT" id="P39005"/>
<dbReference type="STRING" id="4932.YJL174W"/>
<dbReference type="GlyGen" id="P39005">
    <property type="glycosylation" value="2 sites"/>
</dbReference>
<dbReference type="PaxDb" id="4932-YJL174W"/>
<dbReference type="PeptideAtlas" id="P39005"/>
<dbReference type="EnsemblFungi" id="YJL174W_mRNA">
    <property type="protein sequence ID" value="YJL174W"/>
    <property type="gene ID" value="YJL174W"/>
</dbReference>
<dbReference type="GeneID" id="853265"/>
<dbReference type="KEGG" id="sce:YJL174W"/>
<dbReference type="AGR" id="SGD:S000003710"/>
<dbReference type="SGD" id="S000003710">
    <property type="gene designation" value="KRE9"/>
</dbReference>
<dbReference type="VEuPathDB" id="FungiDB:YJL174W"/>
<dbReference type="eggNOG" id="ENOG502S28F">
    <property type="taxonomic scope" value="Eukaryota"/>
</dbReference>
<dbReference type="GeneTree" id="ENSGT00940000176711"/>
<dbReference type="HOGENOM" id="CLU_063732_1_0_1"/>
<dbReference type="InParanoid" id="P39005"/>
<dbReference type="OMA" id="PEAFAIN"/>
<dbReference type="OrthoDB" id="2432613at2759"/>
<dbReference type="BioCyc" id="YEAST:G3O-31610-MONOMER"/>
<dbReference type="BioGRID-ORCS" id="853265">
    <property type="hits" value="10 hits in 10 CRISPR screens"/>
</dbReference>
<dbReference type="PRO" id="PR:P39005"/>
<dbReference type="Proteomes" id="UP000002311">
    <property type="component" value="Chromosome X"/>
</dbReference>
<dbReference type="RNAct" id="P39005">
    <property type="molecule type" value="protein"/>
</dbReference>
<dbReference type="GO" id="GO:0005576">
    <property type="term" value="C:extracellular region"/>
    <property type="evidence" value="ECO:0000314"/>
    <property type="project" value="SGD"/>
</dbReference>
<dbReference type="GO" id="GO:0000324">
    <property type="term" value="C:fungal-type vacuole"/>
    <property type="evidence" value="ECO:0007005"/>
    <property type="project" value="SGD"/>
</dbReference>
<dbReference type="GO" id="GO:0006078">
    <property type="term" value="P:(1-&gt;6)-beta-D-glucan biosynthetic process"/>
    <property type="evidence" value="ECO:0000318"/>
    <property type="project" value="GO_Central"/>
</dbReference>
<dbReference type="GO" id="GO:0006077">
    <property type="term" value="P:(1-&gt;6)-beta-D-glucan metabolic process"/>
    <property type="evidence" value="ECO:0000315"/>
    <property type="project" value="SGD"/>
</dbReference>
<dbReference type="GO" id="GO:0042546">
    <property type="term" value="P:cell wall biogenesis"/>
    <property type="evidence" value="ECO:0007669"/>
    <property type="project" value="InterPro"/>
</dbReference>
<dbReference type="GO" id="GO:0031505">
    <property type="term" value="P:fungal-type cell wall organization"/>
    <property type="evidence" value="ECO:0000315"/>
    <property type="project" value="SGD"/>
</dbReference>
<dbReference type="InterPro" id="IPR045328">
    <property type="entry name" value="Kre9/Knh1"/>
</dbReference>
<dbReference type="InterPro" id="IPR018466">
    <property type="entry name" value="Kre9/Knh1-like_N"/>
</dbReference>
<dbReference type="InterPro" id="IPR008659">
    <property type="entry name" value="Kre9/Knh1_C"/>
</dbReference>
<dbReference type="PANTHER" id="PTHR28154">
    <property type="entry name" value="CELL WALL SYNTHESIS PROTEIN KNH1-RELATED"/>
    <property type="match status" value="1"/>
</dbReference>
<dbReference type="PANTHER" id="PTHR28154:SF1">
    <property type="entry name" value="CELL WALL SYNTHESIS PROTEIN KNH1-RELATED"/>
    <property type="match status" value="1"/>
</dbReference>
<dbReference type="Pfam" id="PF10342">
    <property type="entry name" value="Kre9_KNH"/>
    <property type="match status" value="1"/>
</dbReference>
<dbReference type="Pfam" id="PF05390">
    <property type="entry name" value="Kre9_KNH1_C"/>
    <property type="match status" value="1"/>
</dbReference>
<feature type="signal peptide" evidence="1">
    <location>
        <begin position="1"/>
        <end position="21"/>
    </location>
</feature>
<feature type="chain" id="PRO_0000016849" description="Cell wall synthesis protein KRE9">
    <location>
        <begin position="22"/>
        <end position="276"/>
    </location>
</feature>
<gene>
    <name evidence="4" type="primary">KRE9</name>
    <name evidence="6" type="ordered locus">YJL174W</name>
    <name type="ORF">J0504</name>
</gene>
<proteinExistence type="evidence at protein level"/>
<comment type="function">
    <text evidence="2 3">Involved in cell wall beta(1-&gt;6) glucan synthesis.</text>
</comment>
<comment type="subcellular location">
    <subcellularLocation>
        <location evidence="5">Secreted</location>
        <location evidence="5">Cell wall</location>
    </subcellularLocation>
</comment>
<comment type="PTM">
    <text>O-glycosylated.</text>
</comment>
<comment type="similarity">
    <text evidence="5">Belongs to the KRE9/KNH1 family.</text>
</comment>
<protein>
    <recommendedName>
        <fullName evidence="5">Cell wall synthesis protein KRE9</fullName>
    </recommendedName>
    <alternativeName>
        <fullName evidence="4">Killer toxin resistant protein 9</fullName>
    </alternativeName>
</protein>
<keyword id="KW-0134">Cell wall</keyword>
<keyword id="KW-0961">Cell wall biogenesis/degradation</keyword>
<keyword id="KW-0325">Glycoprotein</keyword>
<keyword id="KW-1185">Reference proteome</keyword>
<keyword id="KW-0964">Secreted</keyword>
<keyword id="KW-0732">Signal</keyword>
<accession>P39005</accession>
<accession>D6VW14</accession>
<reference key="1">
    <citation type="journal article" date="1993" name="Mol. Cell. Biol.">
        <title>The yeast KRE9 gene encodes an O glycoprotein involved in cell surface beta-glucan assembly.</title>
        <authorList>
            <person name="Brown J.L."/>
            <person name="Bussey H."/>
        </authorList>
    </citation>
    <scope>NUCLEOTIDE SEQUENCE [GENOMIC DNA]</scope>
    <scope>FUNCTION</scope>
</reference>
<reference key="2">
    <citation type="submission" date="1990-11" db="EMBL/GenBank/DDBJ databases">
        <authorList>
            <person name="Loehning C."/>
            <person name="Mueller C."/>
            <person name="Freidel K."/>
            <person name="Ciriacy M."/>
        </authorList>
    </citation>
    <scope>NUCLEOTIDE SEQUENCE [GENOMIC DNA]</scope>
</reference>
<reference key="3">
    <citation type="journal article" date="1996" name="EMBO J.">
        <title>Complete nucleotide sequence of Saccharomyces cerevisiae chromosome X.</title>
        <authorList>
            <person name="Galibert F."/>
            <person name="Alexandraki D."/>
            <person name="Baur A."/>
            <person name="Boles E."/>
            <person name="Chalwatzis N."/>
            <person name="Chuat J.-C."/>
            <person name="Coster F."/>
            <person name="Cziepluch C."/>
            <person name="de Haan M."/>
            <person name="Domdey H."/>
            <person name="Durand P."/>
            <person name="Entian K.-D."/>
            <person name="Gatius M."/>
            <person name="Goffeau A."/>
            <person name="Grivell L.A."/>
            <person name="Hennemann A."/>
            <person name="Herbert C.J."/>
            <person name="Heumann K."/>
            <person name="Hilger F."/>
            <person name="Hollenberg C.P."/>
            <person name="Huang M.-E."/>
            <person name="Jacq C."/>
            <person name="Jauniaux J.-C."/>
            <person name="Katsoulou C."/>
            <person name="Kirchrath L."/>
            <person name="Kleine K."/>
            <person name="Kordes E."/>
            <person name="Koetter P."/>
            <person name="Liebl S."/>
            <person name="Louis E.J."/>
            <person name="Manus V."/>
            <person name="Mewes H.-W."/>
            <person name="Miosga T."/>
            <person name="Obermaier B."/>
            <person name="Perea J."/>
            <person name="Pohl T.M."/>
            <person name="Portetelle D."/>
            <person name="Pujol A."/>
            <person name="Purnelle B."/>
            <person name="Ramezani Rad M."/>
            <person name="Rasmussen S.W."/>
            <person name="Rose M."/>
            <person name="Rossau R."/>
            <person name="Schaaff-Gerstenschlaeger I."/>
            <person name="Smits P.H.M."/>
            <person name="Scarcez T."/>
            <person name="Soriano N."/>
            <person name="To Van D."/>
            <person name="Tzermia M."/>
            <person name="Van Broekhoven A."/>
            <person name="Vandenbol M."/>
            <person name="Wedler H."/>
            <person name="von Wettstein D."/>
            <person name="Wambutt R."/>
            <person name="Zagulski M."/>
            <person name="Zollner A."/>
            <person name="Karpfinger-Hartl L."/>
        </authorList>
    </citation>
    <scope>NUCLEOTIDE SEQUENCE [LARGE SCALE GENOMIC DNA]</scope>
    <source>
        <strain>ATCC 204508 / S288c</strain>
    </source>
</reference>
<reference key="4">
    <citation type="journal article" date="2014" name="G3 (Bethesda)">
        <title>The reference genome sequence of Saccharomyces cerevisiae: Then and now.</title>
        <authorList>
            <person name="Engel S.R."/>
            <person name="Dietrich F.S."/>
            <person name="Fisk D.G."/>
            <person name="Binkley G."/>
            <person name="Balakrishnan R."/>
            <person name="Costanzo M.C."/>
            <person name="Dwight S.S."/>
            <person name="Hitz B.C."/>
            <person name="Karra K."/>
            <person name="Nash R.S."/>
            <person name="Weng S."/>
            <person name="Wong E.D."/>
            <person name="Lloyd P."/>
            <person name="Skrzypek M.S."/>
            <person name="Miyasato S.R."/>
            <person name="Simison M."/>
            <person name="Cherry J.M."/>
        </authorList>
    </citation>
    <scope>GENOME REANNOTATION</scope>
    <source>
        <strain>ATCC 204508 / S288c</strain>
    </source>
</reference>
<reference key="5">
    <citation type="journal article" date="1993" name="Genetics">
        <title>A mutational analysis of killer toxin resistance in Saccharomyces cerevisiae identifies new genes involved in cell wall (1--&gt;6)-beta-glucan synthesis.</title>
        <authorList>
            <person name="Brown J.L."/>
            <person name="Kossaczka Z."/>
            <person name="Jiang B."/>
            <person name="Bussey H."/>
        </authorList>
    </citation>
    <scope>FUNCTION</scope>
</reference>
<reference key="6">
    <citation type="journal article" date="2018" name="J. Proteome Res.">
        <title>Enrichment-based proteogenomics identifies microproteins, missing proteins, and novel smORFs in Saccharomyces cerevisiae.</title>
        <authorList>
            <person name="He C."/>
            <person name="Jia C."/>
            <person name="Zhang Y."/>
            <person name="Xu P."/>
        </authorList>
    </citation>
    <scope>IDENTIFICATION BY MASS SPECTROMETRY</scope>
</reference>
<evidence type="ECO:0000255" key="1"/>
<evidence type="ECO:0000269" key="2">
    <source>
    </source>
</evidence>
<evidence type="ECO:0000269" key="3">
    <source>
    </source>
</evidence>
<evidence type="ECO:0000303" key="4">
    <source>
    </source>
</evidence>
<evidence type="ECO:0000305" key="5"/>
<evidence type="ECO:0000312" key="6">
    <source>
        <dbReference type="SGD" id="S000003710"/>
    </source>
</evidence>
<name>KRE9_YEAST</name>
<organism>
    <name type="scientific">Saccharomyces cerevisiae (strain ATCC 204508 / S288c)</name>
    <name type="common">Baker's yeast</name>
    <dbReference type="NCBI Taxonomy" id="559292"/>
    <lineage>
        <taxon>Eukaryota</taxon>
        <taxon>Fungi</taxon>
        <taxon>Dikarya</taxon>
        <taxon>Ascomycota</taxon>
        <taxon>Saccharomycotina</taxon>
        <taxon>Saccharomycetes</taxon>
        <taxon>Saccharomycetales</taxon>
        <taxon>Saccharomycetaceae</taxon>
        <taxon>Saccharomyces</taxon>
    </lineage>
</organism>